<dbReference type="EC" id="2.1.2.1" evidence="1"/>
<dbReference type="EMBL" id="CP000885">
    <property type="protein sequence ID" value="ABX43628.1"/>
    <property type="molecule type" value="Genomic_DNA"/>
</dbReference>
<dbReference type="RefSeq" id="WP_012201278.1">
    <property type="nucleotide sequence ID" value="NC_010001.1"/>
</dbReference>
<dbReference type="SMR" id="A9KSH6"/>
<dbReference type="STRING" id="357809.Cphy_3274"/>
<dbReference type="KEGG" id="cpy:Cphy_3274"/>
<dbReference type="eggNOG" id="COG0112">
    <property type="taxonomic scope" value="Bacteria"/>
</dbReference>
<dbReference type="HOGENOM" id="CLU_022477_2_1_9"/>
<dbReference type="OrthoDB" id="9803846at2"/>
<dbReference type="UniPathway" id="UPA00193"/>
<dbReference type="UniPathway" id="UPA00288">
    <property type="reaction ID" value="UER01023"/>
</dbReference>
<dbReference type="Proteomes" id="UP000000370">
    <property type="component" value="Chromosome"/>
</dbReference>
<dbReference type="GO" id="GO:0005829">
    <property type="term" value="C:cytosol"/>
    <property type="evidence" value="ECO:0007669"/>
    <property type="project" value="TreeGrafter"/>
</dbReference>
<dbReference type="GO" id="GO:0004372">
    <property type="term" value="F:glycine hydroxymethyltransferase activity"/>
    <property type="evidence" value="ECO:0007669"/>
    <property type="project" value="UniProtKB-UniRule"/>
</dbReference>
<dbReference type="GO" id="GO:0030170">
    <property type="term" value="F:pyridoxal phosphate binding"/>
    <property type="evidence" value="ECO:0007669"/>
    <property type="project" value="UniProtKB-UniRule"/>
</dbReference>
<dbReference type="GO" id="GO:0019264">
    <property type="term" value="P:glycine biosynthetic process from serine"/>
    <property type="evidence" value="ECO:0007669"/>
    <property type="project" value="UniProtKB-UniRule"/>
</dbReference>
<dbReference type="GO" id="GO:0035999">
    <property type="term" value="P:tetrahydrofolate interconversion"/>
    <property type="evidence" value="ECO:0007669"/>
    <property type="project" value="UniProtKB-UniRule"/>
</dbReference>
<dbReference type="CDD" id="cd00378">
    <property type="entry name" value="SHMT"/>
    <property type="match status" value="1"/>
</dbReference>
<dbReference type="FunFam" id="3.40.640.10:FF:000001">
    <property type="entry name" value="Serine hydroxymethyltransferase"/>
    <property type="match status" value="1"/>
</dbReference>
<dbReference type="Gene3D" id="3.90.1150.10">
    <property type="entry name" value="Aspartate Aminotransferase, domain 1"/>
    <property type="match status" value="1"/>
</dbReference>
<dbReference type="Gene3D" id="3.40.640.10">
    <property type="entry name" value="Type I PLP-dependent aspartate aminotransferase-like (Major domain)"/>
    <property type="match status" value="1"/>
</dbReference>
<dbReference type="HAMAP" id="MF_00051">
    <property type="entry name" value="SHMT"/>
    <property type="match status" value="1"/>
</dbReference>
<dbReference type="InterPro" id="IPR015424">
    <property type="entry name" value="PyrdxlP-dep_Trfase"/>
</dbReference>
<dbReference type="InterPro" id="IPR015421">
    <property type="entry name" value="PyrdxlP-dep_Trfase_major"/>
</dbReference>
<dbReference type="InterPro" id="IPR015422">
    <property type="entry name" value="PyrdxlP-dep_Trfase_small"/>
</dbReference>
<dbReference type="InterPro" id="IPR001085">
    <property type="entry name" value="Ser_HO-MeTrfase"/>
</dbReference>
<dbReference type="InterPro" id="IPR049943">
    <property type="entry name" value="Ser_HO-MeTrfase-like"/>
</dbReference>
<dbReference type="InterPro" id="IPR019798">
    <property type="entry name" value="Ser_HO-MeTrfase_PLP_BS"/>
</dbReference>
<dbReference type="InterPro" id="IPR039429">
    <property type="entry name" value="SHMT-like_dom"/>
</dbReference>
<dbReference type="NCBIfam" id="NF000586">
    <property type="entry name" value="PRK00011.1"/>
    <property type="match status" value="1"/>
</dbReference>
<dbReference type="PANTHER" id="PTHR11680">
    <property type="entry name" value="SERINE HYDROXYMETHYLTRANSFERASE"/>
    <property type="match status" value="1"/>
</dbReference>
<dbReference type="PANTHER" id="PTHR11680:SF35">
    <property type="entry name" value="SERINE HYDROXYMETHYLTRANSFERASE 1"/>
    <property type="match status" value="1"/>
</dbReference>
<dbReference type="Pfam" id="PF00464">
    <property type="entry name" value="SHMT"/>
    <property type="match status" value="1"/>
</dbReference>
<dbReference type="PIRSF" id="PIRSF000412">
    <property type="entry name" value="SHMT"/>
    <property type="match status" value="1"/>
</dbReference>
<dbReference type="SUPFAM" id="SSF53383">
    <property type="entry name" value="PLP-dependent transferases"/>
    <property type="match status" value="1"/>
</dbReference>
<dbReference type="PROSITE" id="PS00096">
    <property type="entry name" value="SHMT"/>
    <property type="match status" value="1"/>
</dbReference>
<protein>
    <recommendedName>
        <fullName evidence="1">Serine hydroxymethyltransferase</fullName>
        <shortName evidence="1">SHMT</shortName>
        <shortName evidence="1">Serine methylase</shortName>
        <ecNumber evidence="1">2.1.2.1</ecNumber>
    </recommendedName>
</protein>
<feature type="chain" id="PRO_0000369913" description="Serine hydroxymethyltransferase">
    <location>
        <begin position="1"/>
        <end position="412"/>
    </location>
</feature>
<feature type="binding site" evidence="1">
    <location>
        <position position="120"/>
    </location>
    <ligand>
        <name>(6S)-5,6,7,8-tetrahydrofolate</name>
        <dbReference type="ChEBI" id="CHEBI:57453"/>
    </ligand>
</feature>
<feature type="binding site" evidence="1">
    <location>
        <begin position="124"/>
        <end position="126"/>
    </location>
    <ligand>
        <name>(6S)-5,6,7,8-tetrahydrofolate</name>
        <dbReference type="ChEBI" id="CHEBI:57453"/>
    </ligand>
</feature>
<feature type="binding site" evidence="1">
    <location>
        <begin position="353"/>
        <end position="355"/>
    </location>
    <ligand>
        <name>(6S)-5,6,7,8-tetrahydrofolate</name>
        <dbReference type="ChEBI" id="CHEBI:57453"/>
    </ligand>
</feature>
<feature type="site" description="Plays an important role in substrate specificity" evidence="1">
    <location>
        <position position="227"/>
    </location>
</feature>
<feature type="modified residue" description="N6-(pyridoxal phosphate)lysine" evidence="1">
    <location>
        <position position="228"/>
    </location>
</feature>
<reference key="1">
    <citation type="submission" date="2007-11" db="EMBL/GenBank/DDBJ databases">
        <title>Complete genome sequence of Clostridium phytofermentans ISDg.</title>
        <authorList>
            <person name="Leschine S.B."/>
            <person name="Warnick T.A."/>
            <person name="Blanchard J.L."/>
            <person name="Schnell D.J."/>
            <person name="Petit E.L."/>
            <person name="LaTouf W.G."/>
            <person name="Copeland A."/>
            <person name="Lucas S."/>
            <person name="Lapidus A."/>
            <person name="Barry K."/>
            <person name="Glavina del Rio T."/>
            <person name="Dalin E."/>
            <person name="Tice H."/>
            <person name="Pitluck S."/>
            <person name="Kiss H."/>
            <person name="Brettin T."/>
            <person name="Bruce D."/>
            <person name="Detter J.C."/>
            <person name="Han C."/>
            <person name="Kuske C."/>
            <person name="Schmutz J."/>
            <person name="Larimer F."/>
            <person name="Land M."/>
            <person name="Hauser L."/>
            <person name="Kyrpides N."/>
            <person name="Kim E.A."/>
            <person name="Richardson P."/>
        </authorList>
    </citation>
    <scope>NUCLEOTIDE SEQUENCE [LARGE SCALE GENOMIC DNA]</scope>
    <source>
        <strain>ATCC 700394 / DSM 18823 / ISDg</strain>
    </source>
</reference>
<proteinExistence type="inferred from homology"/>
<gene>
    <name evidence="1" type="primary">glyA</name>
    <name type="ordered locus">Cphy_3274</name>
</gene>
<name>GLYA_LACP7</name>
<evidence type="ECO:0000255" key="1">
    <source>
        <dbReference type="HAMAP-Rule" id="MF_00051"/>
    </source>
</evidence>
<sequence length="412" mass="44730">MYSFEDIKVFDPELADSITMEIARQNDHIELIASENFVSKAVMAAMGSPLTNKYAEGYPGKRYYGGCEFVDIAENLAIERAKKLFGCTYANVQPHSGAQANMAVFFALLQPGDTVMGMNLAHGGHLTHGSPVNFSGSYFNIVPYGVDDNGFIDYEEVEKIAKECKPKLIVAGASAYARKIDFKRFREIADLVGAYLMVDMAHIAGLVAAGYHQSPIPYAHVTTTTTHKTLRGPRGGMILSSEEFAEEHKLNKSIFPGTQGGPLMHVIAAKAICFKEALDDSFKDYAGKIISNAGALANELTARGFNLVSGGTDNHLMLIDLQNMNITGKEAEHILDEANITCNKNTVPNDPASPFVTSGIRLGTPAITTRGFNEKDMAVVAEAISLVVKDVDKNKEQAKALVKMLTDAYPLY</sequence>
<organism>
    <name type="scientific">Lachnoclostridium phytofermentans (strain ATCC 700394 / DSM 18823 / ISDg)</name>
    <name type="common">Clostridium phytofermentans</name>
    <dbReference type="NCBI Taxonomy" id="357809"/>
    <lineage>
        <taxon>Bacteria</taxon>
        <taxon>Bacillati</taxon>
        <taxon>Bacillota</taxon>
        <taxon>Clostridia</taxon>
        <taxon>Lachnospirales</taxon>
        <taxon>Lachnospiraceae</taxon>
    </lineage>
</organism>
<comment type="function">
    <text evidence="1">Catalyzes the reversible interconversion of serine and glycine with tetrahydrofolate (THF) serving as the one-carbon carrier. This reaction serves as the major source of one-carbon groups required for the biosynthesis of purines, thymidylate, methionine, and other important biomolecules. Also exhibits THF-independent aldolase activity toward beta-hydroxyamino acids, producing glycine and aldehydes, via a retro-aldol mechanism.</text>
</comment>
<comment type="catalytic activity">
    <reaction evidence="1">
        <text>(6R)-5,10-methylene-5,6,7,8-tetrahydrofolate + glycine + H2O = (6S)-5,6,7,8-tetrahydrofolate + L-serine</text>
        <dbReference type="Rhea" id="RHEA:15481"/>
        <dbReference type="ChEBI" id="CHEBI:15377"/>
        <dbReference type="ChEBI" id="CHEBI:15636"/>
        <dbReference type="ChEBI" id="CHEBI:33384"/>
        <dbReference type="ChEBI" id="CHEBI:57305"/>
        <dbReference type="ChEBI" id="CHEBI:57453"/>
        <dbReference type="EC" id="2.1.2.1"/>
    </reaction>
</comment>
<comment type="cofactor">
    <cofactor evidence="1">
        <name>pyridoxal 5'-phosphate</name>
        <dbReference type="ChEBI" id="CHEBI:597326"/>
    </cofactor>
</comment>
<comment type="pathway">
    <text evidence="1">One-carbon metabolism; tetrahydrofolate interconversion.</text>
</comment>
<comment type="pathway">
    <text evidence="1">Amino-acid biosynthesis; glycine biosynthesis; glycine from L-serine: step 1/1.</text>
</comment>
<comment type="subunit">
    <text evidence="1">Homodimer.</text>
</comment>
<comment type="subcellular location">
    <subcellularLocation>
        <location evidence="1">Cytoplasm</location>
    </subcellularLocation>
</comment>
<comment type="similarity">
    <text evidence="1">Belongs to the SHMT family.</text>
</comment>
<accession>A9KSH6</accession>
<keyword id="KW-0028">Amino-acid biosynthesis</keyword>
<keyword id="KW-0963">Cytoplasm</keyword>
<keyword id="KW-0554">One-carbon metabolism</keyword>
<keyword id="KW-0663">Pyridoxal phosphate</keyword>
<keyword id="KW-1185">Reference proteome</keyword>
<keyword id="KW-0808">Transferase</keyword>